<gene>
    <name evidence="1" type="primary">nadD</name>
    <name type="ordered locus">ECA1306</name>
</gene>
<accession>Q6D7L9</accession>
<dbReference type="EC" id="2.7.7.18" evidence="1"/>
<dbReference type="EMBL" id="BX950851">
    <property type="protein sequence ID" value="CAG74216.1"/>
    <property type="molecule type" value="Genomic_DNA"/>
</dbReference>
<dbReference type="SMR" id="Q6D7L9"/>
<dbReference type="STRING" id="218491.ECA1306"/>
<dbReference type="KEGG" id="eca:ECA1306"/>
<dbReference type="eggNOG" id="COG1057">
    <property type="taxonomic scope" value="Bacteria"/>
</dbReference>
<dbReference type="HOGENOM" id="CLU_069765_0_0_6"/>
<dbReference type="UniPathway" id="UPA00253">
    <property type="reaction ID" value="UER00332"/>
</dbReference>
<dbReference type="Proteomes" id="UP000007966">
    <property type="component" value="Chromosome"/>
</dbReference>
<dbReference type="GO" id="GO:0005524">
    <property type="term" value="F:ATP binding"/>
    <property type="evidence" value="ECO:0007669"/>
    <property type="project" value="UniProtKB-KW"/>
</dbReference>
<dbReference type="GO" id="GO:0004515">
    <property type="term" value="F:nicotinate-nucleotide adenylyltransferase activity"/>
    <property type="evidence" value="ECO:0007669"/>
    <property type="project" value="UniProtKB-UniRule"/>
</dbReference>
<dbReference type="GO" id="GO:0009435">
    <property type="term" value="P:NAD biosynthetic process"/>
    <property type="evidence" value="ECO:0007669"/>
    <property type="project" value="UniProtKB-UniRule"/>
</dbReference>
<dbReference type="CDD" id="cd02165">
    <property type="entry name" value="NMNAT"/>
    <property type="match status" value="1"/>
</dbReference>
<dbReference type="FunFam" id="3.40.50.620:FF:000039">
    <property type="entry name" value="Probable nicotinate-nucleotide adenylyltransferase"/>
    <property type="match status" value="1"/>
</dbReference>
<dbReference type="Gene3D" id="3.40.50.620">
    <property type="entry name" value="HUPs"/>
    <property type="match status" value="1"/>
</dbReference>
<dbReference type="HAMAP" id="MF_00244">
    <property type="entry name" value="NaMN_adenylyltr"/>
    <property type="match status" value="1"/>
</dbReference>
<dbReference type="InterPro" id="IPR004821">
    <property type="entry name" value="Cyt_trans-like"/>
</dbReference>
<dbReference type="InterPro" id="IPR005248">
    <property type="entry name" value="NadD/NMNAT"/>
</dbReference>
<dbReference type="InterPro" id="IPR014729">
    <property type="entry name" value="Rossmann-like_a/b/a_fold"/>
</dbReference>
<dbReference type="NCBIfam" id="TIGR00125">
    <property type="entry name" value="cyt_tran_rel"/>
    <property type="match status" value="1"/>
</dbReference>
<dbReference type="NCBIfam" id="TIGR00482">
    <property type="entry name" value="nicotinate (nicotinamide) nucleotide adenylyltransferase"/>
    <property type="match status" value="1"/>
</dbReference>
<dbReference type="NCBIfam" id="NF000839">
    <property type="entry name" value="PRK00071.1-1"/>
    <property type="match status" value="1"/>
</dbReference>
<dbReference type="NCBIfam" id="NF000840">
    <property type="entry name" value="PRK00071.1-3"/>
    <property type="match status" value="1"/>
</dbReference>
<dbReference type="PANTHER" id="PTHR39321">
    <property type="entry name" value="NICOTINATE-NUCLEOTIDE ADENYLYLTRANSFERASE-RELATED"/>
    <property type="match status" value="1"/>
</dbReference>
<dbReference type="PANTHER" id="PTHR39321:SF3">
    <property type="entry name" value="PHOSPHOPANTETHEINE ADENYLYLTRANSFERASE"/>
    <property type="match status" value="1"/>
</dbReference>
<dbReference type="Pfam" id="PF01467">
    <property type="entry name" value="CTP_transf_like"/>
    <property type="match status" value="1"/>
</dbReference>
<dbReference type="SUPFAM" id="SSF52374">
    <property type="entry name" value="Nucleotidylyl transferase"/>
    <property type="match status" value="1"/>
</dbReference>
<name>NADD_PECAS</name>
<organism>
    <name type="scientific">Pectobacterium atrosepticum (strain SCRI 1043 / ATCC BAA-672)</name>
    <name type="common">Erwinia carotovora subsp. atroseptica</name>
    <dbReference type="NCBI Taxonomy" id="218491"/>
    <lineage>
        <taxon>Bacteria</taxon>
        <taxon>Pseudomonadati</taxon>
        <taxon>Pseudomonadota</taxon>
        <taxon>Gammaproteobacteria</taxon>
        <taxon>Enterobacterales</taxon>
        <taxon>Pectobacteriaceae</taxon>
        <taxon>Pectobacterium</taxon>
    </lineage>
</organism>
<sequence length="213" mass="24209">MPSLTAFFGGTFDPIHYGHLQPVTALAKLVGLTQVVLMPNNVPPHRQQPEASSRQRFHMAELAVEGNPLFTVDDRELQRQTPSYTIDTLEALRAEKGHDAPLGFIIGQDSLLTLHHWHRWQDLLGVCHLLVCARPGYRSTLETPELQQWLDDHLTHAPEDLHQQPHGRIFLADTPLVTISATDIRQRRQQGLDCHDLLPPVVLRYINEHGLYQ</sequence>
<protein>
    <recommendedName>
        <fullName evidence="1">Probable nicotinate-nucleotide adenylyltransferase</fullName>
        <ecNumber evidence="1">2.7.7.18</ecNumber>
    </recommendedName>
    <alternativeName>
        <fullName evidence="1">Deamido-NAD(+) diphosphorylase</fullName>
    </alternativeName>
    <alternativeName>
        <fullName evidence="1">Deamido-NAD(+) pyrophosphorylase</fullName>
    </alternativeName>
    <alternativeName>
        <fullName evidence="1">Nicotinate mononucleotide adenylyltransferase</fullName>
        <shortName evidence="1">NaMN adenylyltransferase</shortName>
    </alternativeName>
</protein>
<proteinExistence type="inferred from homology"/>
<keyword id="KW-0067">ATP-binding</keyword>
<keyword id="KW-0520">NAD</keyword>
<keyword id="KW-0547">Nucleotide-binding</keyword>
<keyword id="KW-0548">Nucleotidyltransferase</keyword>
<keyword id="KW-0662">Pyridine nucleotide biosynthesis</keyword>
<keyword id="KW-1185">Reference proteome</keyword>
<keyword id="KW-0808">Transferase</keyword>
<feature type="chain" id="PRO_0000181411" description="Probable nicotinate-nucleotide adenylyltransferase">
    <location>
        <begin position="1"/>
        <end position="213"/>
    </location>
</feature>
<comment type="function">
    <text evidence="1">Catalyzes the reversible adenylation of nicotinate mononucleotide (NaMN) to nicotinic acid adenine dinucleotide (NaAD).</text>
</comment>
<comment type="catalytic activity">
    <reaction evidence="1">
        <text>nicotinate beta-D-ribonucleotide + ATP + H(+) = deamido-NAD(+) + diphosphate</text>
        <dbReference type="Rhea" id="RHEA:22860"/>
        <dbReference type="ChEBI" id="CHEBI:15378"/>
        <dbReference type="ChEBI" id="CHEBI:30616"/>
        <dbReference type="ChEBI" id="CHEBI:33019"/>
        <dbReference type="ChEBI" id="CHEBI:57502"/>
        <dbReference type="ChEBI" id="CHEBI:58437"/>
        <dbReference type="EC" id="2.7.7.18"/>
    </reaction>
</comment>
<comment type="pathway">
    <text evidence="1">Cofactor biosynthesis; NAD(+) biosynthesis; deamido-NAD(+) from nicotinate D-ribonucleotide: step 1/1.</text>
</comment>
<comment type="similarity">
    <text evidence="1">Belongs to the NadD family.</text>
</comment>
<reference key="1">
    <citation type="journal article" date="2004" name="Proc. Natl. Acad. Sci. U.S.A.">
        <title>Genome sequence of the enterobacterial phytopathogen Erwinia carotovora subsp. atroseptica and characterization of virulence factors.</title>
        <authorList>
            <person name="Bell K.S."/>
            <person name="Sebaihia M."/>
            <person name="Pritchard L."/>
            <person name="Holden M.T.G."/>
            <person name="Hyman L.J."/>
            <person name="Holeva M.C."/>
            <person name="Thomson N.R."/>
            <person name="Bentley S.D."/>
            <person name="Churcher L.J.C."/>
            <person name="Mungall K."/>
            <person name="Atkin R."/>
            <person name="Bason N."/>
            <person name="Brooks K."/>
            <person name="Chillingworth T."/>
            <person name="Clark K."/>
            <person name="Doggett J."/>
            <person name="Fraser A."/>
            <person name="Hance Z."/>
            <person name="Hauser H."/>
            <person name="Jagels K."/>
            <person name="Moule S."/>
            <person name="Norbertczak H."/>
            <person name="Ormond D."/>
            <person name="Price C."/>
            <person name="Quail M.A."/>
            <person name="Sanders M."/>
            <person name="Walker D."/>
            <person name="Whitehead S."/>
            <person name="Salmond G.P.C."/>
            <person name="Birch P.R.J."/>
            <person name="Parkhill J."/>
            <person name="Toth I.K."/>
        </authorList>
    </citation>
    <scope>NUCLEOTIDE SEQUENCE [LARGE SCALE GENOMIC DNA]</scope>
    <source>
        <strain>SCRI 1043 / ATCC BAA-672</strain>
    </source>
</reference>
<evidence type="ECO:0000255" key="1">
    <source>
        <dbReference type="HAMAP-Rule" id="MF_00244"/>
    </source>
</evidence>